<sequence>MPWPFGPSGSSEAPPPQKPRDDKVEGREPAKSWNSLLPKPDPPLQAAKEWAPVFLTAVGSLAAFMFYQSYLRRFAGAASIQENFFRKRSLLGRVTSVGDGDGFHLYHTPGGKLAGWGWLRKIPEGRSNLKGETISIRLAGIDAPEGPHFGRPGQPFAAEAQAHLSKYILHRRVRAHLHKRDQYNRIVATVSTRQPFIKKDVGLEMLKQGLATTYEAKSGVEWGGKESIYKAAEAKAKAKKLGLWSIKASEFESPRDFKNRTQGNEKSERDVEGSTVQKPWWRRWLTG</sequence>
<name>LCL3_VERA1</name>
<dbReference type="EC" id="3.1.-.-"/>
<dbReference type="EMBL" id="DS985218">
    <property type="protein sequence ID" value="EEY18595.1"/>
    <property type="molecule type" value="Genomic_DNA"/>
</dbReference>
<dbReference type="RefSeq" id="XP_003005098.1">
    <property type="nucleotide sequence ID" value="XM_003005052.1"/>
</dbReference>
<dbReference type="SMR" id="C9SI22"/>
<dbReference type="GeneID" id="9530316"/>
<dbReference type="KEGG" id="val:VDBG_04704"/>
<dbReference type="eggNOG" id="ENOG502S1U4">
    <property type="taxonomic scope" value="Eukaryota"/>
</dbReference>
<dbReference type="HOGENOM" id="CLU_046484_0_1_1"/>
<dbReference type="OMA" id="IYHTPGG"/>
<dbReference type="OrthoDB" id="430293at2759"/>
<dbReference type="Proteomes" id="UP000008698">
    <property type="component" value="Unassembled WGS sequence"/>
</dbReference>
<dbReference type="GO" id="GO:0016020">
    <property type="term" value="C:membrane"/>
    <property type="evidence" value="ECO:0007669"/>
    <property type="project" value="UniProtKB-SubCell"/>
</dbReference>
<dbReference type="GO" id="GO:0005739">
    <property type="term" value="C:mitochondrion"/>
    <property type="evidence" value="ECO:0007669"/>
    <property type="project" value="UniProtKB-SubCell"/>
</dbReference>
<dbReference type="GO" id="GO:0004519">
    <property type="term" value="F:endonuclease activity"/>
    <property type="evidence" value="ECO:0007669"/>
    <property type="project" value="UniProtKB-KW"/>
</dbReference>
<dbReference type="GO" id="GO:0046872">
    <property type="term" value="F:metal ion binding"/>
    <property type="evidence" value="ECO:0007669"/>
    <property type="project" value="UniProtKB-KW"/>
</dbReference>
<dbReference type="FunFam" id="2.40.50.90:FF:000029">
    <property type="entry name" value="Probable endonuclease lcl3"/>
    <property type="match status" value="1"/>
</dbReference>
<dbReference type="Gene3D" id="2.40.50.90">
    <property type="match status" value="1"/>
</dbReference>
<dbReference type="InterPro" id="IPR035437">
    <property type="entry name" value="SNase_OB-fold_sf"/>
</dbReference>
<dbReference type="InterPro" id="IPR016071">
    <property type="entry name" value="Staphylococal_nuclease_OB-fold"/>
</dbReference>
<dbReference type="PANTHER" id="PTHR12302">
    <property type="entry name" value="EBNA2 BINDING PROTEIN P100"/>
    <property type="match status" value="1"/>
</dbReference>
<dbReference type="PANTHER" id="PTHR12302:SF3">
    <property type="entry name" value="SERINE_THREONINE-PROTEIN KINASE 31"/>
    <property type="match status" value="1"/>
</dbReference>
<dbReference type="Pfam" id="PF00565">
    <property type="entry name" value="SNase"/>
    <property type="match status" value="1"/>
</dbReference>
<dbReference type="SMART" id="SM00318">
    <property type="entry name" value="SNc"/>
    <property type="match status" value="1"/>
</dbReference>
<dbReference type="SUPFAM" id="SSF50199">
    <property type="entry name" value="Staphylococcal nuclease"/>
    <property type="match status" value="1"/>
</dbReference>
<dbReference type="PROSITE" id="PS50830">
    <property type="entry name" value="TNASE_3"/>
    <property type="match status" value="1"/>
</dbReference>
<gene>
    <name type="primary">LCL3</name>
    <name type="ORF">VDBG_04704</name>
</gene>
<proteinExistence type="inferred from homology"/>
<comment type="subcellular location">
    <subcellularLocation>
        <location>Mitochondrion</location>
    </subcellularLocation>
    <subcellularLocation>
        <location evidence="1">Membrane</location>
        <topology evidence="1">Single-pass membrane protein</topology>
    </subcellularLocation>
</comment>
<comment type="similarity">
    <text evidence="5">Belongs to the LCL3 family.</text>
</comment>
<evidence type="ECO:0000250" key="1"/>
<evidence type="ECO:0000255" key="2"/>
<evidence type="ECO:0000255" key="3">
    <source>
        <dbReference type="PROSITE-ProRule" id="PRU00272"/>
    </source>
</evidence>
<evidence type="ECO:0000256" key="4">
    <source>
        <dbReference type="SAM" id="MobiDB-lite"/>
    </source>
</evidence>
<evidence type="ECO:0000305" key="5"/>
<feature type="chain" id="PRO_0000408686" description="Probable endonuclease LCL3">
    <location>
        <begin position="1"/>
        <end position="287"/>
    </location>
</feature>
<feature type="transmembrane region" description="Helical" evidence="2">
    <location>
        <begin position="50"/>
        <end position="67"/>
    </location>
</feature>
<feature type="domain" description="TNase-like" evidence="3">
    <location>
        <begin position="88"/>
        <end position="246"/>
    </location>
</feature>
<feature type="region of interest" description="Disordered" evidence="4">
    <location>
        <begin position="1"/>
        <end position="40"/>
    </location>
</feature>
<feature type="region of interest" description="Disordered" evidence="4">
    <location>
        <begin position="254"/>
        <end position="278"/>
    </location>
</feature>
<feature type="compositionally biased region" description="Basic and acidic residues" evidence="4">
    <location>
        <begin position="18"/>
        <end position="30"/>
    </location>
</feature>
<feature type="compositionally biased region" description="Basic and acidic residues" evidence="4">
    <location>
        <begin position="254"/>
        <end position="272"/>
    </location>
</feature>
<feature type="active site" evidence="3">
    <location>
        <position position="137"/>
    </location>
</feature>
<feature type="active site" evidence="3">
    <location>
        <position position="145"/>
    </location>
</feature>
<feature type="active site" evidence="3">
    <location>
        <position position="185"/>
    </location>
</feature>
<feature type="binding site" evidence="3">
    <location>
        <position position="142"/>
    </location>
    <ligand>
        <name>Ca(2+)</name>
        <dbReference type="ChEBI" id="CHEBI:29108"/>
    </ligand>
</feature>
<protein>
    <recommendedName>
        <fullName>Probable endonuclease LCL3</fullName>
        <ecNumber>3.1.-.-</ecNumber>
    </recommendedName>
</protein>
<accession>C9SI22</accession>
<organism>
    <name type="scientific">Verticillium alfalfae (strain VaMs.102 / ATCC MYA-4576 / FGSC 10136)</name>
    <name type="common">Verticillium wilt of alfalfa</name>
    <name type="synonym">Verticillium albo-atrum</name>
    <dbReference type="NCBI Taxonomy" id="526221"/>
    <lineage>
        <taxon>Eukaryota</taxon>
        <taxon>Fungi</taxon>
        <taxon>Dikarya</taxon>
        <taxon>Ascomycota</taxon>
        <taxon>Pezizomycotina</taxon>
        <taxon>Sordariomycetes</taxon>
        <taxon>Hypocreomycetidae</taxon>
        <taxon>Glomerellales</taxon>
        <taxon>Plectosphaerellaceae</taxon>
        <taxon>Verticillium</taxon>
    </lineage>
</organism>
<reference key="1">
    <citation type="journal article" date="2011" name="PLoS Pathog.">
        <title>Comparative genomics yields insights into niche adaptation of plant vascular wilt pathogens.</title>
        <authorList>
            <person name="Klosterman S.J."/>
            <person name="Subbarao K.V."/>
            <person name="Kang S."/>
            <person name="Veronese P."/>
            <person name="Gold S.E."/>
            <person name="Thomma B.P.H.J."/>
            <person name="Chen Z."/>
            <person name="Henrissat B."/>
            <person name="Lee Y.-H."/>
            <person name="Park J."/>
            <person name="Garcia-Pedrajas M.D."/>
            <person name="Barbara D.J."/>
            <person name="Anchieta A."/>
            <person name="de Jonge R."/>
            <person name="Santhanam P."/>
            <person name="Maruthachalam K."/>
            <person name="Atallah Z."/>
            <person name="Amyotte S.G."/>
            <person name="Paz Z."/>
            <person name="Inderbitzin P."/>
            <person name="Hayes R.J."/>
            <person name="Heiman D.I."/>
            <person name="Young S."/>
            <person name="Zeng Q."/>
            <person name="Engels R."/>
            <person name="Galagan J."/>
            <person name="Cuomo C.A."/>
            <person name="Dobinson K.F."/>
            <person name="Ma L.-J."/>
        </authorList>
    </citation>
    <scope>NUCLEOTIDE SEQUENCE [LARGE SCALE GENOMIC DNA]</scope>
    <source>
        <strain>VaMs.102 / ATCC MYA-4576 / FGSC 10136</strain>
    </source>
</reference>
<keyword id="KW-0106">Calcium</keyword>
<keyword id="KW-0255">Endonuclease</keyword>
<keyword id="KW-0378">Hydrolase</keyword>
<keyword id="KW-0472">Membrane</keyword>
<keyword id="KW-0479">Metal-binding</keyword>
<keyword id="KW-0496">Mitochondrion</keyword>
<keyword id="KW-0540">Nuclease</keyword>
<keyword id="KW-1185">Reference proteome</keyword>
<keyword id="KW-0812">Transmembrane</keyword>
<keyword id="KW-1133">Transmembrane helix</keyword>